<protein>
    <recommendedName>
        <fullName evidence="23">Transcription factor VIP1</fullName>
    </recommendedName>
    <alternativeName>
        <fullName evidence="22">Protein SULPHATE UTILIZATION EFFICIENCY 3</fullName>
    </alternativeName>
    <alternativeName>
        <fullName evidence="20">VirE2-interacting protein 1</fullName>
        <shortName evidence="20">AtVIP1</shortName>
    </alternativeName>
    <alternativeName>
        <fullName evidence="21">bZIP transcription factor 51</fullName>
        <shortName evidence="21">AtbZIP51</shortName>
        <shortName evidence="23">bZIP protein 51</shortName>
    </alternativeName>
</protein>
<organism>
    <name type="scientific">Arabidopsis thaliana</name>
    <name type="common">Mouse-ear cress</name>
    <dbReference type="NCBI Taxonomy" id="3702"/>
    <lineage>
        <taxon>Eukaryota</taxon>
        <taxon>Viridiplantae</taxon>
        <taxon>Streptophyta</taxon>
        <taxon>Embryophyta</taxon>
        <taxon>Tracheophyta</taxon>
        <taxon>Spermatophyta</taxon>
        <taxon>Magnoliopsida</taxon>
        <taxon>eudicotyledons</taxon>
        <taxon>Gunneridae</taxon>
        <taxon>Pentapetalae</taxon>
        <taxon>rosids</taxon>
        <taxon>malvids</taxon>
        <taxon>Brassicales</taxon>
        <taxon>Brassicaceae</taxon>
        <taxon>Camelineae</taxon>
        <taxon>Arabidopsis</taxon>
    </lineage>
</organism>
<accession>Q9MA75</accession>
<accession>Q8LDQ9</accession>
<accession>Q9M5N9</accession>
<reference key="1">
    <citation type="journal article" date="2000" name="Nature">
        <title>Sequence and analysis of chromosome 1 of the plant Arabidopsis thaliana.</title>
        <authorList>
            <person name="Theologis A."/>
            <person name="Ecker J.R."/>
            <person name="Palm C.J."/>
            <person name="Federspiel N.A."/>
            <person name="Kaul S."/>
            <person name="White O."/>
            <person name="Alonso J."/>
            <person name="Altafi H."/>
            <person name="Araujo R."/>
            <person name="Bowman C.L."/>
            <person name="Brooks S.Y."/>
            <person name="Buehler E."/>
            <person name="Chan A."/>
            <person name="Chao Q."/>
            <person name="Chen H."/>
            <person name="Cheuk R.F."/>
            <person name="Chin C.W."/>
            <person name="Chung M.K."/>
            <person name="Conn L."/>
            <person name="Conway A.B."/>
            <person name="Conway A.R."/>
            <person name="Creasy T.H."/>
            <person name="Dewar K."/>
            <person name="Dunn P."/>
            <person name="Etgu P."/>
            <person name="Feldblyum T.V."/>
            <person name="Feng J.-D."/>
            <person name="Fong B."/>
            <person name="Fujii C.Y."/>
            <person name="Gill J.E."/>
            <person name="Goldsmith A.D."/>
            <person name="Haas B."/>
            <person name="Hansen N.F."/>
            <person name="Hughes B."/>
            <person name="Huizar L."/>
            <person name="Hunter J.L."/>
            <person name="Jenkins J."/>
            <person name="Johnson-Hopson C."/>
            <person name="Khan S."/>
            <person name="Khaykin E."/>
            <person name="Kim C.J."/>
            <person name="Koo H.L."/>
            <person name="Kremenetskaia I."/>
            <person name="Kurtz D.B."/>
            <person name="Kwan A."/>
            <person name="Lam B."/>
            <person name="Langin-Hooper S."/>
            <person name="Lee A."/>
            <person name="Lee J.M."/>
            <person name="Lenz C.A."/>
            <person name="Li J.H."/>
            <person name="Li Y.-P."/>
            <person name="Lin X."/>
            <person name="Liu S.X."/>
            <person name="Liu Z.A."/>
            <person name="Luros J.S."/>
            <person name="Maiti R."/>
            <person name="Marziali A."/>
            <person name="Militscher J."/>
            <person name="Miranda M."/>
            <person name="Nguyen M."/>
            <person name="Nierman W.C."/>
            <person name="Osborne B.I."/>
            <person name="Pai G."/>
            <person name="Peterson J."/>
            <person name="Pham P.K."/>
            <person name="Rizzo M."/>
            <person name="Rooney T."/>
            <person name="Rowley D."/>
            <person name="Sakano H."/>
            <person name="Salzberg S.L."/>
            <person name="Schwartz J.R."/>
            <person name="Shinn P."/>
            <person name="Southwick A.M."/>
            <person name="Sun H."/>
            <person name="Tallon L.J."/>
            <person name="Tambunga G."/>
            <person name="Toriumi M.J."/>
            <person name="Town C.D."/>
            <person name="Utterback T."/>
            <person name="Van Aken S."/>
            <person name="Vaysberg M."/>
            <person name="Vysotskaia V.S."/>
            <person name="Walker M."/>
            <person name="Wu D."/>
            <person name="Yu G."/>
            <person name="Fraser C.M."/>
            <person name="Venter J.C."/>
            <person name="Davis R.W."/>
        </authorList>
    </citation>
    <scope>NUCLEOTIDE SEQUENCE [LARGE SCALE GENOMIC DNA]</scope>
    <source>
        <strain>cv. Columbia</strain>
    </source>
</reference>
<reference key="2">
    <citation type="journal article" date="2017" name="Plant J.">
        <title>Araport11: a complete reannotation of the Arabidopsis thaliana reference genome.</title>
        <authorList>
            <person name="Cheng C.Y."/>
            <person name="Krishnakumar V."/>
            <person name="Chan A.P."/>
            <person name="Thibaud-Nissen F."/>
            <person name="Schobel S."/>
            <person name="Town C.D."/>
        </authorList>
    </citation>
    <scope>GENOME REANNOTATION</scope>
    <source>
        <strain>cv. Columbia</strain>
    </source>
</reference>
<reference key="3">
    <citation type="journal article" date="2003" name="Science">
        <title>Empirical analysis of transcriptional activity in the Arabidopsis genome.</title>
        <authorList>
            <person name="Yamada K."/>
            <person name="Lim J."/>
            <person name="Dale J.M."/>
            <person name="Chen H."/>
            <person name="Shinn P."/>
            <person name="Palm C.J."/>
            <person name="Southwick A.M."/>
            <person name="Wu H.C."/>
            <person name="Kim C.J."/>
            <person name="Nguyen M."/>
            <person name="Pham P.K."/>
            <person name="Cheuk R.F."/>
            <person name="Karlin-Newmann G."/>
            <person name="Liu S.X."/>
            <person name="Lam B."/>
            <person name="Sakano H."/>
            <person name="Wu T."/>
            <person name="Yu G."/>
            <person name="Miranda M."/>
            <person name="Quach H.L."/>
            <person name="Tripp M."/>
            <person name="Chang C.H."/>
            <person name="Lee J.M."/>
            <person name="Toriumi M.J."/>
            <person name="Chan M.M."/>
            <person name="Tang C.C."/>
            <person name="Onodera C.S."/>
            <person name="Deng J.M."/>
            <person name="Akiyama K."/>
            <person name="Ansari Y."/>
            <person name="Arakawa T."/>
            <person name="Banh J."/>
            <person name="Banno F."/>
            <person name="Bowser L."/>
            <person name="Brooks S.Y."/>
            <person name="Carninci P."/>
            <person name="Chao Q."/>
            <person name="Choy N."/>
            <person name="Enju A."/>
            <person name="Goldsmith A.D."/>
            <person name="Gurjal M."/>
            <person name="Hansen N.F."/>
            <person name="Hayashizaki Y."/>
            <person name="Johnson-Hopson C."/>
            <person name="Hsuan V.W."/>
            <person name="Iida K."/>
            <person name="Karnes M."/>
            <person name="Khan S."/>
            <person name="Koesema E."/>
            <person name="Ishida J."/>
            <person name="Jiang P.X."/>
            <person name="Jones T."/>
            <person name="Kawai J."/>
            <person name="Kamiya A."/>
            <person name="Meyers C."/>
            <person name="Nakajima M."/>
            <person name="Narusaka M."/>
            <person name="Seki M."/>
            <person name="Sakurai T."/>
            <person name="Satou M."/>
            <person name="Tamse R."/>
            <person name="Vaysberg M."/>
            <person name="Wallender E.K."/>
            <person name="Wong C."/>
            <person name="Yamamura Y."/>
            <person name="Yuan S."/>
            <person name="Shinozaki K."/>
            <person name="Davis R.W."/>
            <person name="Theologis A."/>
            <person name="Ecker J.R."/>
        </authorList>
    </citation>
    <scope>NUCLEOTIDE SEQUENCE [LARGE SCALE MRNA]</scope>
    <source>
        <strain>cv. Columbia</strain>
    </source>
</reference>
<reference key="4">
    <citation type="submission" date="2002-03" db="EMBL/GenBank/DDBJ databases">
        <title>Full-length cDNA from Arabidopsis thaliana.</title>
        <authorList>
            <person name="Brover V.V."/>
            <person name="Troukhan M.E."/>
            <person name="Alexandrov N.A."/>
            <person name="Lu Y.-P."/>
            <person name="Flavell R.B."/>
            <person name="Feldmann K.A."/>
        </authorList>
    </citation>
    <scope>NUCLEOTIDE SEQUENCE [LARGE SCALE MRNA]</scope>
</reference>
<reference key="5">
    <citation type="journal article" date="2001" name="EMBO J.">
        <title>VIP1, an Arabidopsis protein that interacts with Agrobacterium VirE2, is involved in VirE2 nuclear import and Agrobacterium infectivity.</title>
        <authorList>
            <person name="Tzfira T."/>
            <person name="Vaidya M."/>
            <person name="Citovsky V."/>
        </authorList>
    </citation>
    <scope>NUCLEOTIDE SEQUENCE [MRNA] OF 81-341</scope>
    <scope>FUNCTION</scope>
    <scope>INTERACTION WITH AGROBACTERIUM VIRE2</scope>
    <scope>SUBCELLULAR LOCATION</scope>
    <source>
        <strain>cv. Columbia</strain>
    </source>
</reference>
<reference key="6">
    <citation type="journal article" date="2002" name="Proc. Natl. Acad. Sci. U.S.A.">
        <title>Increasing plant susceptibility to Agrobacterium infection by overexpression of the Arabidopsis nuclear protein VIP1.</title>
        <authorList>
            <person name="Tzfira T."/>
            <person name="Vaidya M."/>
            <person name="Citovsky V."/>
        </authorList>
    </citation>
    <scope>FUNCTION</scope>
    <scope>SUBCELLULAR LOCATION</scope>
    <scope>INTERACTION WITH KAP1 AND AGROBACTERIUM VIRE2</scope>
</reference>
<reference key="7">
    <citation type="journal article" date="2002" name="Trends Plant Sci.">
        <title>bZIP transcription factors in Arabidopsis.</title>
        <authorList>
            <person name="Jakoby M."/>
            <person name="Weisshaar B."/>
            <person name="Droege-Laser W."/>
            <person name="Vicente-Carbajosa J."/>
            <person name="Tiedemann J."/>
            <person name="Kroj T."/>
            <person name="Parcy F."/>
        </authorList>
    </citation>
    <scope>GENE FAMILY</scope>
    <scope>NOMENCLATURE</scope>
</reference>
<reference key="8">
    <citation type="journal article" date="2004" name="Dev. Dyn.">
        <title>Reorganization of specific chromosomal domains and activation of silent genes in plant cells acquiring pluripotentiality.</title>
        <authorList>
            <person name="Avivi Y."/>
            <person name="Morad V."/>
            <person name="Ben-Meir H."/>
            <person name="Zhao J."/>
            <person name="Kashkush K."/>
            <person name="Tzfira T."/>
            <person name="Citovsky V."/>
            <person name="Grafi G."/>
        </authorList>
    </citation>
    <scope>FUNCTION</scope>
    <scope>SUBCELLULAR LOCATION</scope>
    <scope>TISSUE SPECIFICITY</scope>
    <scope>INDUCTION DURING PLURIPOTENTIALITY ACQUISITION</scope>
</reference>
<reference key="9">
    <citation type="journal article" date="2004" name="Nature">
        <title>Involvement of targeted proteolysis in plant genetic transformation by Agrobacterium.</title>
        <authorList>
            <person name="Tzfira T."/>
            <person name="Vaidya M."/>
            <person name="Citovsky V."/>
        </authorList>
    </citation>
    <scope>PROTEASOMAL DEGRADATION MEDIATED BY AGROBACTERIUM VIRF</scope>
    <scope>INTERACTION WITH AGROBACTERIUM VIRF</scope>
</reference>
<reference key="10">
    <citation type="journal article" date="2005" name="Proc. Natl. Acad. Sci. U.S.A.">
        <title>Uncoupling of the functions of the Arabidopsis VIP1 protein in transient and stable plant genetic transformation by Agrobacterium.</title>
        <authorList>
            <person name="Li J."/>
            <person name="Krichevsky A."/>
            <person name="Vaidya M."/>
            <person name="Tzfira T."/>
            <person name="Citovsky V."/>
        </authorList>
    </citation>
    <scope>FUNCTION</scope>
    <scope>TISSUE SPECIFICITY</scope>
    <scope>SUBCELLULAR LOCATION</scope>
    <scope>HOMOMULTIMERIZATION</scope>
    <scope>INTERACTION WITH HISTONE H2A RAT5</scope>
    <scope>MUTAGENESIS OF 163-ILE--GLY-341</scope>
    <source>
        <strain>cv. Columbia</strain>
    </source>
</reference>
<reference key="11">
    <citation type="journal article" date="2006" name="Proc. Natl. Acad. Sci. U.S.A.">
        <title>Transcriptional and posttranscriptional regulation of transcription factor expression in Arabidopsis roots.</title>
        <authorList>
            <person name="Lee J.-Y."/>
            <person name="Colinas J."/>
            <person name="Wang J.Y."/>
            <person name="Mace D."/>
            <person name="Ohler U."/>
            <person name="Benfey P.N."/>
        </authorList>
    </citation>
    <scope>SUBCELLULAR LOCATION [LARGE SCALE ANALYSIS]</scope>
</reference>
<reference key="12">
    <citation type="journal article" date="2007" name="Biochem. Biophys. Res. Commun.">
        <title>A conserved proline residue in the leucine zipper region of AtbZIP34 and AtbZIP61 in Arabidopsis thaliana interferes with the formation of homodimer.</title>
        <authorList>
            <person name="Shen H."/>
            <person name="Cao K."/>
            <person name="Wang X."/>
        </authorList>
    </citation>
    <scope>INTERACTION WITH BZIP34 AND BZIP61</scope>
</reference>
<reference key="13">
    <citation type="journal article" date="2007" name="Plant Cell">
        <title>Arabidopsis VIRE2 INTERACTING PROTEIN2 is required for Agrobacterium T-DNA integration in plants.</title>
        <authorList>
            <person name="Anand A."/>
            <person name="Krichevsky A."/>
            <person name="Schornack S."/>
            <person name="Lahaye T."/>
            <person name="Tzfira T."/>
            <person name="Tang Y."/>
            <person name="Citovsky V."/>
            <person name="Mysore K.S."/>
        </authorList>
    </citation>
    <scope>INTERACTION WITH VIP2</scope>
    <source>
        <strain>cv. Columbia</strain>
    </source>
</reference>
<reference key="14">
    <citation type="journal article" date="2007" name="Science">
        <title>Trojan horse strategy in Agrobacterium transformation: abusing MAPK defense signaling.</title>
        <authorList>
            <person name="Djamei A."/>
            <person name="Pitzschke A."/>
            <person name="Nakagami H."/>
            <person name="Rajh I."/>
            <person name="Hirt H."/>
        </authorList>
    </citation>
    <scope>FUNCTION</scope>
    <scope>SUBCELLULAR LOCATION</scope>
    <scope>PHOSPHORYLATION AT SER-79</scope>
    <scope>INTERACTION WITH MPK3</scope>
    <scope>MUTAGENESIS OF SER-79</scope>
</reference>
<reference key="15">
    <citation type="journal article" date="2009" name="Plant Physiol.">
        <title>Large-scale Arabidopsis phosphoproteome profiling reveals novel chloroplast kinase substrates and phosphorylation networks.</title>
        <authorList>
            <person name="Reiland S."/>
            <person name="Messerli G."/>
            <person name="Baerenfaller K."/>
            <person name="Gerrits B."/>
            <person name="Endler A."/>
            <person name="Grossmann J."/>
            <person name="Gruissem W."/>
            <person name="Baginsky S."/>
        </authorList>
    </citation>
    <scope>IDENTIFICATION BY MASS SPECTROMETRY [LARGE SCALE ANALYSIS]</scope>
</reference>
<reference key="16">
    <citation type="journal article" date="2009" name="Proc. Natl. Acad. Sci. U.S.A.">
        <title>VIP1 response elements mediate mitogen-activated protein kinase 3-induced stress gene expression.</title>
        <authorList>
            <person name="Pitzschke A."/>
            <person name="Djamei A."/>
            <person name="Teige M."/>
            <person name="Hirt H."/>
        </authorList>
    </citation>
    <scope>FUNCTION</scope>
    <scope>MUTAGENESIS OF LYS-212</scope>
    <scope>HOMODIMERIZATION</scope>
</reference>
<reference key="17">
    <citation type="journal article" date="2010" name="Cell Host Microbe">
        <title>Agrobacterium induces expression of a host F-box protein required for tumorigenicity.</title>
        <authorList>
            <person name="Zaltsman A."/>
            <person name="Krichevsky A."/>
            <person name="Loyter A."/>
            <person name="Citovsky V."/>
        </authorList>
    </citation>
    <scope>PROTEASOMAL DEGRADATION MEDIATED BY VBF</scope>
    <scope>INTERACTION WITH VBF AND AGROBACTERIUM VIRE2</scope>
</reference>
<reference key="18">
    <citation type="journal article" date="2010" name="J. Exp. Bot.">
        <title>Isolation and characterization of low-sulphur-tolerant mutants of Arabidopsis.</title>
        <authorList>
            <person name="Wu Y."/>
            <person name="Zhao Q."/>
            <person name="Gao L."/>
            <person name="Yu X.-M."/>
            <person name="Fang P."/>
            <person name="Oliver D.J."/>
            <person name="Xiang C.-B."/>
        </authorList>
    </citation>
    <scope>FUNCTION</scope>
    <scope>DISRUPTION PHENOTYPE</scope>
    <source>
        <strain>cv. Columbia</strain>
    </source>
</reference>
<reference key="19">
    <citation type="journal article" date="2012" name="Plant Physiol.">
        <title>A bZIP protein, VIP1, is a regulator of osmosensory signaling in Arabidopsis.</title>
        <authorList>
            <person name="Tsugama D."/>
            <person name="Liu S."/>
            <person name="Takano T."/>
        </authorList>
    </citation>
    <scope>FUNCTION</scope>
</reference>
<reference key="20">
    <citation type="journal article" date="2014" name="PLoS ONE">
        <title>Analysis of functions of VIP1 and its close homologs in osmosensory responses of Arabidopsis thaliana.</title>
        <authorList>
            <person name="Tsugama D."/>
            <person name="Liu S."/>
            <person name="Takano T."/>
        </authorList>
    </citation>
    <scope>FUNCTION</scope>
    <scope>SUBCELLULAR LOCATION</scope>
</reference>
<reference key="21">
    <citation type="journal article" date="2016" name="Plant Physiol.">
        <title>The bZIP protein VIP1 is involved in touch responses in Arabidopsis roots.</title>
        <authorList>
            <person name="Tsugama D."/>
            <person name="Liu S."/>
            <person name="Takano T."/>
        </authorList>
    </citation>
    <scope>FUNCTION</scope>
</reference>
<reference key="22">
    <citation type="journal article" date="2018" name="Ann. Bot.">
        <title>Calcium signalling regulates the functions of the bZIP protein VIP1 in touch responses in Arabidopsis thaliana.</title>
        <authorList>
            <person name="Tsugama D."/>
            <person name="Liu S."/>
            <person name="Fujino K."/>
            <person name="Takano T."/>
        </authorList>
    </citation>
    <scope>FUNCTION</scope>
</reference>
<reference key="23">
    <citation type="journal article" date="2019" name="J. Exp. Bot.">
        <title>Protein phosphatase 2A regulates the nuclear accumulation of the Arabidopsis bZIP protein VIP1 under hypo-osmotic stress.</title>
        <authorList>
            <person name="Tsugama D."/>
            <person name="Yoon H.S."/>
            <person name="Fujino K."/>
            <person name="Liu S."/>
            <person name="Takano T."/>
        </authorList>
    </citation>
    <scope>FUNCTION</scope>
    <scope>SUBCELLULAR LOCATION</scope>
</reference>
<feature type="chain" id="PRO_0000405593" description="Transcription factor VIP1">
    <location>
        <begin position="1"/>
        <end position="341"/>
    </location>
</feature>
<feature type="domain" description="bZIP" evidence="2">
    <location>
        <begin position="194"/>
        <end position="257"/>
    </location>
</feature>
<feature type="region of interest" description="Necessary and sufficient for transient T-DNA transformation end expression">
    <location>
        <begin position="1"/>
        <end position="162"/>
    </location>
</feature>
<feature type="region of interest" description="Disordered" evidence="3">
    <location>
        <begin position="1"/>
        <end position="33"/>
    </location>
</feature>
<feature type="region of interest" description="Disordered" evidence="3">
    <location>
        <begin position="59"/>
        <end position="106"/>
    </location>
</feature>
<feature type="region of interest" description="Disordered" evidence="3">
    <location>
        <begin position="135"/>
        <end position="156"/>
    </location>
</feature>
<feature type="region of interest" description="Involved in homomultimerization and histone H2A binding">
    <location>
        <begin position="163"/>
        <end position="341"/>
    </location>
</feature>
<feature type="region of interest" description="Basic motif" evidence="2">
    <location>
        <begin position="196"/>
        <end position="217"/>
    </location>
</feature>
<feature type="region of interest" description="Leucine-zipper" evidence="2">
    <location>
        <begin position="222"/>
        <end position="257"/>
    </location>
</feature>
<feature type="region of interest" description="Disordered" evidence="3">
    <location>
        <begin position="307"/>
        <end position="341"/>
    </location>
</feature>
<feature type="short sequence motif" description="Nuclear localization signal" evidence="1">
    <location>
        <begin position="198"/>
        <end position="205"/>
    </location>
</feature>
<feature type="compositionally biased region" description="Basic and acidic residues" evidence="3">
    <location>
        <begin position="15"/>
        <end position="24"/>
    </location>
</feature>
<feature type="compositionally biased region" description="Low complexity" evidence="3">
    <location>
        <begin position="71"/>
        <end position="80"/>
    </location>
</feature>
<feature type="compositionally biased region" description="Polar residues" evidence="3">
    <location>
        <begin position="307"/>
        <end position="331"/>
    </location>
</feature>
<feature type="modified residue" description="Phosphoserine" evidence="11">
    <location>
        <position position="79"/>
    </location>
</feature>
<feature type="mutagenesis site" description="Cytoplasmic and nuclear." evidence="11">
    <original>S</original>
    <variation>A</variation>
    <location>
        <position position="79"/>
    </location>
</feature>
<feature type="mutagenesis site" description="Only nuclear." evidence="11">
    <original>S</original>
    <variation>D</variation>
    <location>
        <position position="79"/>
    </location>
</feature>
<feature type="mutagenesis site" description="Transient T-DNA transformation end expression, but impaired stable genetic transformation by Agrobacterium, loss of multimerization, and abolished interaction with histone H2A." evidence="8">
    <location>
        <begin position="163"/>
        <end position="341"/>
    </location>
</feature>
<feature type="mutagenesis site" description="Impaired VIP1 response elements (VREs) DNA-binding and altered subsequent transcription activation." evidence="12">
    <original>K</original>
    <variation>R</variation>
    <variation>T</variation>
    <location>
        <position position="212"/>
    </location>
</feature>
<feature type="sequence conflict" description="In Ref. 4; AAM63070." evidence="23" ref="4">
    <original>I</original>
    <variation>L</variation>
    <location>
        <position position="132"/>
    </location>
</feature>
<feature type="sequence conflict" description="In Ref. 4; AAM63070." evidence="23" ref="4">
    <original>T</original>
    <variation>K</variation>
    <location>
        <position position="319"/>
    </location>
</feature>
<name>VIP1_ARATH</name>
<keyword id="KW-0010">Activator</keyword>
<keyword id="KW-0192">Crown gall tumor</keyword>
<keyword id="KW-0963">Cytoplasm</keyword>
<keyword id="KW-0238">DNA-binding</keyword>
<keyword id="KW-0539">Nucleus</keyword>
<keyword id="KW-0597">Phosphoprotein</keyword>
<keyword id="KW-0611">Plant defense</keyword>
<keyword id="KW-1185">Reference proteome</keyword>
<keyword id="KW-0804">Transcription</keyword>
<keyword id="KW-0805">Transcription regulation</keyword>
<keyword id="KW-0833">Ubl conjugation pathway</keyword>
<comment type="function">
    <text evidence="4 5 6 8 11 12 14 15 16 17 18 19">Transcription activator that binds specifically to the VIP1 response elements (VREs) DNA sequence 5'-ACNGCT-3' found in some stress genes (e.g. TRX8 and MYB44), when phosphorylated/activated by MPK3. Required for Agrobacterium VirE2 nuclear import and tumorigenicity. Promotes transient expression of T-DNA in early stages by interacting with VirE2 in complex with the T-DNA and facilitating its translocation to the nucleus, and mediates stable genetic transformation by Agrobacterium by binding H2A histone. Prevents cell differentiation and shoot formation. Limits sulfate utilization efficiency (SUE) and sulfate uptake, especially in low-sulfur conditions (PubMed:11432846, PubMed:12124400, PubMed:15108305, PubMed:15824315, PubMed:17947581, PubMed:19820165, PubMed:20547563). Plays a role in osmosensory response by binding to the 5'-AGCTGT/G-3' DNA sequence found in the promoters of the hypoosmolarity-responsive genes CYP707A1 and CYP707A3 (PubMed:22452852, PubMed:25093810). Involved in the negative regulation of touch-induced root bending and salt-dependent root bending (PubMed:27208231, PubMed:30010769, PubMed:31504762).</text>
</comment>
<comment type="subunit">
    <text evidence="4 5 7 8 9 10 11 13">Forms homomultimers. Interacts with Agrobacterium tumefaciens VirE2 and mediates its translocation to the host nucleus. Binds to VIP2. Forms a complex made of Agrobacterium VirE2, VIP1, VIP2 and single-stranded DNA (ssDNA). The interaction with KAP1 mediates its nuclear import. Binds to the H2A histone RAT5. Interacts with MPK3 and Agrobacterium virF. Forms a complex made of VIP1, VBF and Agrobacterium virE2. Interacts with SCF(VBF) E3 ubiquitin ligase complex. Binds directly to VBF. Forms heterodimers with BZIP34 and BZIP61.</text>
</comment>
<comment type="interaction">
    <interactant intactId="EBI-606057">
        <id>Q9MA75</id>
    </interactant>
    <interactant intactId="EBI-605118">
        <id>P15597</id>
        <label>virF</label>
    </interactant>
    <organismsDiffer>true</organismsDiffer>
    <experiments>3</experiments>
</comment>
<comment type="subcellular location">
    <subcellularLocation>
        <location evidence="11 16 19">Cytoplasm</location>
    </subcellularLocation>
    <subcellularLocation>
        <location evidence="11 16 19">Nucleus</location>
    </subcellularLocation>
    <text evidence="11 16 19">Confined to nucleus when phosphorylated (PubMed:17947581). Transiently accumulates in the nucleus when cells are exposed to hypoosmotic conditions (PubMed:25093810, PubMed:31504762).</text>
</comment>
<comment type="tissue specificity">
    <text evidence="6 8">Mostly expressed in dividing cells, present in leaves, roots and seedlings.</text>
</comment>
<comment type="induction">
    <text evidence="6">Transcriptionally activated during the acquisition of pluripotentiality (in protoplasts) by pericentromeric chromatin decondensation and DNA demethylation. Targeted to degradation by the proteasome by VBF and Agrobacterium virF in SCF(VBF) and SCF(virF) E3 ubiquitin ligase complexes after mediating T-DNA translocation to the nucleus.</text>
</comment>
<comment type="PTM">
    <text evidence="11">Phosphorylated by MPK3. This phosphorylation promotes nuclear localization.</text>
</comment>
<comment type="disruption phenotype">
    <text evidence="14">Enhanced low sulfur tolerance with higher rate of sulfate uptake at low sulfate levels. Improved tolerance to heavy metal (e.g. CdCl(2)) and oxidative stress (e.g. paraquat).</text>
</comment>
<comment type="similarity">
    <text evidence="23">Belongs to the bZIP family.</text>
</comment>
<gene>
    <name evidence="20" type="primary">VIP1</name>
    <name evidence="21" type="synonym">BZIP51</name>
    <name evidence="22" type="synonym">SUE3</name>
    <name evidence="24" type="ordered locus">At1g43700</name>
    <name evidence="25" type="ORF">F2J6.6</name>
</gene>
<dbReference type="EMBL" id="AC009526">
    <property type="protein sequence ID" value="AAF63120.1"/>
    <property type="molecule type" value="Genomic_DNA"/>
</dbReference>
<dbReference type="EMBL" id="CP002684">
    <property type="protein sequence ID" value="AEE31988.1"/>
    <property type="molecule type" value="Genomic_DNA"/>
</dbReference>
<dbReference type="EMBL" id="AY065453">
    <property type="protein sequence ID" value="AAL38894.1"/>
    <property type="molecule type" value="mRNA"/>
</dbReference>
<dbReference type="EMBL" id="AY117284">
    <property type="protein sequence ID" value="AAM51359.1"/>
    <property type="molecule type" value="mRNA"/>
</dbReference>
<dbReference type="EMBL" id="AY085857">
    <property type="protein sequence ID" value="AAM63070.1"/>
    <property type="molecule type" value="mRNA"/>
</dbReference>
<dbReference type="EMBL" id="AF225983">
    <property type="protein sequence ID" value="AAF37279.4"/>
    <property type="molecule type" value="mRNA"/>
</dbReference>
<dbReference type="PIR" id="D96500">
    <property type="entry name" value="D96500"/>
</dbReference>
<dbReference type="RefSeq" id="NP_564486.1">
    <property type="nucleotide sequence ID" value="NM_103495.4"/>
</dbReference>
<dbReference type="SMR" id="Q9MA75"/>
<dbReference type="BioGRID" id="26182">
    <property type="interactions" value="17"/>
</dbReference>
<dbReference type="FunCoup" id="Q9MA75">
    <property type="interactions" value="952"/>
</dbReference>
<dbReference type="IntAct" id="Q9MA75">
    <property type="interactions" value="13"/>
</dbReference>
<dbReference type="STRING" id="3702.Q9MA75"/>
<dbReference type="iPTMnet" id="Q9MA75"/>
<dbReference type="PaxDb" id="3702-AT1G43700.1"/>
<dbReference type="ProteomicsDB" id="242481"/>
<dbReference type="EnsemblPlants" id="AT1G43700.1">
    <property type="protein sequence ID" value="AT1G43700.1"/>
    <property type="gene ID" value="AT1G43700"/>
</dbReference>
<dbReference type="GeneID" id="840957"/>
<dbReference type="Gramene" id="AT1G43700.1">
    <property type="protein sequence ID" value="AT1G43700.1"/>
    <property type="gene ID" value="AT1G43700"/>
</dbReference>
<dbReference type="KEGG" id="ath:AT1G43700"/>
<dbReference type="Araport" id="AT1G43700"/>
<dbReference type="TAIR" id="AT1G43700">
    <property type="gene designation" value="VIP1"/>
</dbReference>
<dbReference type="eggNOG" id="ENOG502QRMU">
    <property type="taxonomic scope" value="Eukaryota"/>
</dbReference>
<dbReference type="HOGENOM" id="CLU_026205_2_1_1"/>
<dbReference type="InParanoid" id="Q9MA75"/>
<dbReference type="OMA" id="TSARMDI"/>
<dbReference type="PhylomeDB" id="Q9MA75"/>
<dbReference type="CD-CODE" id="4299E36E">
    <property type="entry name" value="Nucleolus"/>
</dbReference>
<dbReference type="PRO" id="PR:Q9MA75"/>
<dbReference type="Proteomes" id="UP000006548">
    <property type="component" value="Chromosome 1"/>
</dbReference>
<dbReference type="ExpressionAtlas" id="Q9MA75">
    <property type="expression patterns" value="baseline and differential"/>
</dbReference>
<dbReference type="GO" id="GO:0005829">
    <property type="term" value="C:cytosol"/>
    <property type="evidence" value="ECO:0000314"/>
    <property type="project" value="TAIR"/>
</dbReference>
<dbReference type="GO" id="GO:0005634">
    <property type="term" value="C:nucleus"/>
    <property type="evidence" value="ECO:0000314"/>
    <property type="project" value="TAIR"/>
</dbReference>
<dbReference type="GO" id="GO:0003682">
    <property type="term" value="F:chromatin binding"/>
    <property type="evidence" value="ECO:0000314"/>
    <property type="project" value="TAIR"/>
</dbReference>
<dbReference type="GO" id="GO:0003700">
    <property type="term" value="F:DNA-binding transcription factor activity"/>
    <property type="evidence" value="ECO:0000314"/>
    <property type="project" value="TAIR"/>
</dbReference>
<dbReference type="GO" id="GO:0051019">
    <property type="term" value="F:mitogen-activated protein kinase binding"/>
    <property type="evidence" value="ECO:0000353"/>
    <property type="project" value="UniProtKB"/>
</dbReference>
<dbReference type="GO" id="GO:0003676">
    <property type="term" value="F:nucleic acid binding"/>
    <property type="evidence" value="ECO:0000314"/>
    <property type="project" value="TAIR"/>
</dbReference>
<dbReference type="GO" id="GO:0043565">
    <property type="term" value="F:sequence-specific DNA binding"/>
    <property type="evidence" value="ECO:0000314"/>
    <property type="project" value="TAIR"/>
</dbReference>
<dbReference type="GO" id="GO:0000976">
    <property type="term" value="F:transcription cis-regulatory region binding"/>
    <property type="evidence" value="ECO:0000353"/>
    <property type="project" value="TAIR"/>
</dbReference>
<dbReference type="GO" id="GO:0009970">
    <property type="term" value="P:cellular response to sulfate starvation"/>
    <property type="evidence" value="ECO:0000315"/>
    <property type="project" value="TAIR"/>
</dbReference>
<dbReference type="GO" id="GO:0006952">
    <property type="term" value="P:defense response"/>
    <property type="evidence" value="ECO:0007669"/>
    <property type="project" value="UniProtKB-KW"/>
</dbReference>
<dbReference type="GO" id="GO:0009294">
    <property type="term" value="P:DNA-mediated transformation"/>
    <property type="evidence" value="ECO:0000314"/>
    <property type="project" value="TAIR"/>
</dbReference>
<dbReference type="GO" id="GO:0051170">
    <property type="term" value="P:import into nucleus"/>
    <property type="evidence" value="ECO:0000314"/>
    <property type="project" value="TAIR"/>
</dbReference>
<dbReference type="GO" id="GO:0045596">
    <property type="term" value="P:negative regulation of cell differentiation"/>
    <property type="evidence" value="ECO:0000314"/>
    <property type="project" value="UniProtKB"/>
</dbReference>
<dbReference type="GO" id="GO:0007231">
    <property type="term" value="P:osmosensory signaling pathway"/>
    <property type="evidence" value="ECO:0000315"/>
    <property type="project" value="TAIR"/>
</dbReference>
<dbReference type="GO" id="GO:0006970">
    <property type="term" value="P:response to osmotic stress"/>
    <property type="evidence" value="ECO:0000315"/>
    <property type="project" value="TAIR"/>
</dbReference>
<dbReference type="GO" id="GO:0009652">
    <property type="term" value="P:thigmotropism"/>
    <property type="evidence" value="ECO:0000315"/>
    <property type="project" value="TAIR"/>
</dbReference>
<dbReference type="CDD" id="cd14703">
    <property type="entry name" value="bZIP_plant_RF2"/>
    <property type="match status" value="1"/>
</dbReference>
<dbReference type="FunFam" id="1.20.5.170:FF:000083">
    <property type="entry name" value="Transcription factor VIP1"/>
    <property type="match status" value="1"/>
</dbReference>
<dbReference type="Gene3D" id="1.20.5.170">
    <property type="match status" value="1"/>
</dbReference>
<dbReference type="InterPro" id="IPR004827">
    <property type="entry name" value="bZIP"/>
</dbReference>
<dbReference type="InterPro" id="IPR044759">
    <property type="entry name" value="bZIP_RF2"/>
</dbReference>
<dbReference type="InterPro" id="IPR046347">
    <property type="entry name" value="bZIP_sf"/>
</dbReference>
<dbReference type="PANTHER" id="PTHR13690">
    <property type="entry name" value="TRANSCRIPTION FACTOR POSF21-RELATED"/>
    <property type="match status" value="1"/>
</dbReference>
<dbReference type="PANTHER" id="PTHR13690:SF86">
    <property type="entry name" value="TRANSCRIPTION FACTOR VIP1"/>
    <property type="match status" value="1"/>
</dbReference>
<dbReference type="Pfam" id="PF00170">
    <property type="entry name" value="bZIP_1"/>
    <property type="match status" value="1"/>
</dbReference>
<dbReference type="SMART" id="SM00338">
    <property type="entry name" value="BRLZ"/>
    <property type="match status" value="1"/>
</dbReference>
<dbReference type="SUPFAM" id="SSF57959">
    <property type="entry name" value="Leucine zipper domain"/>
    <property type="match status" value="1"/>
</dbReference>
<dbReference type="PROSITE" id="PS50217">
    <property type="entry name" value="BZIP"/>
    <property type="match status" value="1"/>
</dbReference>
<evidence type="ECO:0000250" key="1"/>
<evidence type="ECO:0000255" key="2">
    <source>
        <dbReference type="PROSITE-ProRule" id="PRU00978"/>
    </source>
</evidence>
<evidence type="ECO:0000256" key="3">
    <source>
        <dbReference type="SAM" id="MobiDB-lite"/>
    </source>
</evidence>
<evidence type="ECO:0000269" key="4">
    <source>
    </source>
</evidence>
<evidence type="ECO:0000269" key="5">
    <source>
    </source>
</evidence>
<evidence type="ECO:0000269" key="6">
    <source>
    </source>
</evidence>
<evidence type="ECO:0000269" key="7">
    <source>
    </source>
</evidence>
<evidence type="ECO:0000269" key="8">
    <source>
    </source>
</evidence>
<evidence type="ECO:0000269" key="9">
    <source>
    </source>
</evidence>
<evidence type="ECO:0000269" key="10">
    <source>
    </source>
</evidence>
<evidence type="ECO:0000269" key="11">
    <source>
    </source>
</evidence>
<evidence type="ECO:0000269" key="12">
    <source>
    </source>
</evidence>
<evidence type="ECO:0000269" key="13">
    <source>
    </source>
</evidence>
<evidence type="ECO:0000269" key="14">
    <source>
    </source>
</evidence>
<evidence type="ECO:0000269" key="15">
    <source>
    </source>
</evidence>
<evidence type="ECO:0000269" key="16">
    <source>
    </source>
</evidence>
<evidence type="ECO:0000269" key="17">
    <source>
    </source>
</evidence>
<evidence type="ECO:0000269" key="18">
    <source>
    </source>
</evidence>
<evidence type="ECO:0000269" key="19">
    <source>
    </source>
</evidence>
<evidence type="ECO:0000303" key="20">
    <source>
    </source>
</evidence>
<evidence type="ECO:0000303" key="21">
    <source>
    </source>
</evidence>
<evidence type="ECO:0000303" key="22">
    <source>
    </source>
</evidence>
<evidence type="ECO:0000305" key="23"/>
<evidence type="ECO:0000312" key="24">
    <source>
        <dbReference type="Araport" id="AT1G43700"/>
    </source>
</evidence>
<evidence type="ECO:0000312" key="25">
    <source>
        <dbReference type="EMBL" id="AAF63120.1"/>
    </source>
</evidence>
<sequence>MEGGGRGPNQTILSEIEHMPEAPRQRISHHRRARSETFFSGESIDDLLLFDPSDIDFSSLDFLNAPPPPQQSQQQPQASPMSVDSEETSSNGVVPPNSLPPKPEARFGRHVRSFSVDSDFFDDLGVTEEKFIATSSGEKKKGNHHHSRSNSMDGEMSSASFNIESILASVSGKDSGKKNMGMGGDRLAELALLDPKRAKRILANRQSAARSKERKIRYTGELERKVQTLQNEATTLSAQVTMLQRGTSELNTENKHLKMRLQALEQQAELRDALNEALRDELNRLKVVAGEIPQGNGNSYNRAQFSSQQSAMNQFGNKTNQQMSTNGQPSLPSYMDFTKRG</sequence>
<proteinExistence type="evidence at protein level"/>